<keyword id="KW-0002">3D-structure</keyword>
<keyword id="KW-0998">Cell outer membrane</keyword>
<keyword id="KW-0903">Direct protein sequencing</keyword>
<keyword id="KW-0378">Hydrolase</keyword>
<keyword id="KW-0472">Membrane</keyword>
<keyword id="KW-0574">Periplasm</keyword>
<keyword id="KW-0614">Plasmid</keyword>
<keyword id="KW-0645">Protease</keyword>
<keyword id="KW-0964">Secreted</keyword>
<keyword id="KW-0720">Serine protease</keyword>
<keyword id="KW-0732">Signal</keyword>
<keyword id="KW-0812">Transmembrane</keyword>
<keyword id="KW-1134">Transmembrane beta strand</keyword>
<keyword id="KW-0843">Virulence</keyword>
<keyword id="KW-0865">Zymogen</keyword>
<protein>
    <recommendedName>
        <fullName>Serine protease pet autotransporter</fullName>
        <ecNumber>3.4.21.-</ecNumber>
    </recommendedName>
    <component>
        <recommendedName>
            <fullName>Serine protease pet</fullName>
        </recommendedName>
        <alternativeName>
            <fullName>Plasmid-encoded toxin pet</fullName>
        </alternativeName>
    </component>
    <component>
        <recommendedName>
            <fullName>Serine protease pet translocator</fullName>
        </recommendedName>
    </component>
</protein>
<comment type="function">
    <text evidence="4 5 6 7">Serine protease with enterotoxic and cytotoxic activity. Internalization into the host cell is required for the induction of cytopathic effects. However, the serine activity is not necessary for secretion and internalization into the host cell.</text>
</comment>
<comment type="activity regulation">
    <text evidence="4">Inhibition of cytotoxic activity by phenylmethylsulfonyl fluoride.</text>
</comment>
<comment type="subcellular location">
    <molecule>Serine protease pet autotransporter</molecule>
    <subcellularLocation>
        <location evidence="1">Periplasm</location>
    </subcellularLocation>
</comment>
<comment type="subcellular location">
    <molecule>Serine protease pet</molecule>
    <subcellularLocation>
        <location>Secreted</location>
    </subcellularLocation>
    <subcellularLocation>
        <location>Cell surface</location>
    </subcellularLocation>
</comment>
<comment type="subcellular location">
    <molecule>Serine protease pet translocator</molecule>
    <subcellularLocation>
        <location evidence="1">Cell outer membrane</location>
        <topology evidence="1">Multi-pass membrane protein</topology>
    </subcellularLocation>
    <text evidence="1">The cleaved C-terminal fragment (autotransporter domain) is localized in the outer membrane.</text>
</comment>
<comment type="domain">
    <text>The signal peptide, cleaved at the inner membrane, guides the autotransporter protein to the periplasmic space. Then, insertion of the C-terminal translocator domain in the outer membrane forms a hydrophilic pore for the translocation of the passenger domain to the bacterial cell surface, with subsequent cleavage.</text>
</comment>
<comment type="PTM">
    <text>Cleaved to release the mature protein from the outer membrane.</text>
</comment>
<accession>O68900</accession>
<accession>D3H579</accession>
<evidence type="ECO:0000250" key="1"/>
<evidence type="ECO:0000255" key="2">
    <source>
        <dbReference type="PROSITE-ProRule" id="PRU00556"/>
    </source>
</evidence>
<evidence type="ECO:0000255" key="3">
    <source>
        <dbReference type="PROSITE-ProRule" id="PRU01028"/>
    </source>
</evidence>
<evidence type="ECO:0000269" key="4">
    <source>
    </source>
</evidence>
<evidence type="ECO:0000269" key="5">
    <source>
    </source>
</evidence>
<evidence type="ECO:0000269" key="6">
    <source>
    </source>
</evidence>
<evidence type="ECO:0000269" key="7">
    <source>
    </source>
</evidence>
<evidence type="ECO:0007829" key="8">
    <source>
        <dbReference type="PDB" id="4OM9"/>
    </source>
</evidence>
<organism>
    <name type="scientific">Escherichia coli O44:H18 (strain 042 / EAEC)</name>
    <dbReference type="NCBI Taxonomy" id="216592"/>
    <lineage>
        <taxon>Bacteria</taxon>
        <taxon>Pseudomonadati</taxon>
        <taxon>Pseudomonadota</taxon>
        <taxon>Gammaproteobacteria</taxon>
        <taxon>Enterobacterales</taxon>
        <taxon>Enterobacteriaceae</taxon>
        <taxon>Escherichia</taxon>
    </lineage>
</organism>
<sequence>MNKIYSIKYSAATGGLIAVSELAKKVICKTNRKISAALLSLAVISYTNIIYAANMDISKAWARDYLDLAQNKGVFQPGSTHVKIKLKDGTDFSFPALPVPDFSSATANGAATSIGGAYAVTVAHNAKNKSSANYQTYGSTQYTQINRMTTGNDFSIQRLNKYVVETRGADTSFNYNENNQNIIDRYGVDVGNGKKEIIGFRVGSGNTTFSGIKTSQTYQADLLSASLFHITNLRANTVGGNKVEYENDSYFTNLTTNGDSGSGVYVFDNKEDKWVLLGTTHGIIGNGKTQKTYVTPFDSKTTNELKQLFIQNVNIDNNTATIGGGKITIGNTTQDIEKNKNNQNKDLVFSGGGKISLKENLDLGYGGFIFDENKKYTVSAEGNNNVTFKGAGIDIGKGSTVDWNIKYASNDALHKIGEGSLNVIQAQNTNLKTGNGTVILGAQKTFNNIYVAGGPGTVQLNAENALGEGDYAGIFFTENGGKLDLNGHNQTFKKIAATDSGTTITNSNTTKESVLSVNNQNNYIYHGNVDGNVRLEHHLDTKQDNARLILDGDIQANSISIKNAPLVMQGHATDHAIFRTTKTNNCPEFLCGVDWVTRIKNAENSVNQKNKTTYKSNNQVSDLSQPDWETRKFRFDNLNIEDSSLSIARNADVEGNIQAKNSVINIGDKTAYIDLYSGKNITGAGFTFRQDIKSGDSIGESKFTGGIMATDGSISIGDKAIVTLNTVSSLDRTALTIHKGANVTASSSLFTTSNIKSGGDLTLTGATESTGEITPSMFYAAGGYELTEDGANFTAKNQASVTGDIKSEKAAKLSFGSADKDNSATRYSQFALAMLDGFDTSYQGSIKAAQSSLAMNNALWKVTGNSELKKLNSTGSMVLFNGGKNIFNTLTVDELTTSNSAFVMRTNTQQADQLIVKNKLEGANNLLLVDFIEKKGNDKNGLNIDLVKAPENTSKDVFKTETQTIGFSDVTPEIKQQEKDGKSVWTLTGYKTVANADAAKKATSLMSGGYKAFLAEVNNLNKRMGDLRDINGEAGAWARIMSGTGSAGGGFSDNYTHVQVGADNKHELDGLDLFTGVTMTYTDSHAGSDAFSGETKSVGAGLYASAMFESGAYIDLIGKYVHHDNEYTATFAGLGTRDYSSHSWYAGAEVGYRYHVTDSAWIEPQAELVYGAVSGKQFSWKDQGMNLTMKDKDFNPLIGRTGVDVGKSFSGKDWKVTARAGLGYQFDLFANGETVLRDASGEKRIKGEKDGRMLMNVGLNAEIRDNVRFGLEFEKSAFGKYNVDNAINANFRYSF</sequence>
<feature type="signal peptide" evidence="7">
    <location>
        <begin position="1"/>
        <end position="52"/>
    </location>
</feature>
<feature type="chain" id="PRO_0000387604" description="Serine protease pet autotransporter">
    <location>
        <begin position="53"/>
        <end position="1295"/>
    </location>
</feature>
<feature type="chain" id="PRO_0000026970" description="Serine protease pet">
    <location>
        <begin position="53"/>
        <end position="1018"/>
    </location>
</feature>
<feature type="chain" id="PRO_0000026971" description="Serine protease pet translocator">
    <location>
        <begin position="1019"/>
        <end position="1295"/>
    </location>
</feature>
<feature type="domain" description="Peptidase S6" evidence="3">
    <location>
        <begin position="54"/>
        <end position="304"/>
    </location>
</feature>
<feature type="domain" description="Autotransporter" evidence="2">
    <location>
        <begin position="1029"/>
        <end position="1295"/>
    </location>
</feature>
<feature type="active site" description="Charge relay system" evidence="3">
    <location>
        <position position="124"/>
    </location>
</feature>
<feature type="active site" description="Charge relay system" evidence="3">
    <location>
        <position position="153"/>
    </location>
</feature>
<feature type="active site" description="Charge relay system" evidence="3">
    <location>
        <position position="260"/>
    </location>
</feature>
<feature type="site" description="Cleavage">
    <location>
        <begin position="1018"/>
        <end position="1019"/>
    </location>
</feature>
<feature type="mutagenesis site" description="Loss of protease activity, but does not affect secretion." evidence="4">
    <original>S</original>
    <variation>I</variation>
    <location>
        <position position="260"/>
    </location>
</feature>
<feature type="mutagenesis site" description="Abolishes secretion." evidence="6">
    <original>NN</original>
    <variation>GI</variation>
    <location>
        <begin position="1018"/>
        <end position="1019"/>
    </location>
</feature>
<feature type="turn" evidence="8">
    <location>
        <begin position="57"/>
        <end position="59"/>
    </location>
</feature>
<feature type="helix" evidence="8">
    <location>
        <begin position="62"/>
        <end position="69"/>
    </location>
</feature>
<feature type="strand" evidence="8">
    <location>
        <begin position="112"/>
        <end position="115"/>
    </location>
</feature>
<feature type="strand" evidence="8">
    <location>
        <begin position="118"/>
        <end position="122"/>
    </location>
</feature>
<feature type="helix" evidence="8">
    <location>
        <begin position="123"/>
        <end position="125"/>
    </location>
</feature>
<feature type="strand" evidence="8">
    <location>
        <begin position="128"/>
        <end position="137"/>
    </location>
</feature>
<feature type="strand" evidence="8">
    <location>
        <begin position="140"/>
        <end position="149"/>
    </location>
</feature>
<feature type="strand" evidence="8">
    <location>
        <begin position="154"/>
        <end position="161"/>
    </location>
</feature>
<feature type="helix" evidence="8">
    <location>
        <begin position="179"/>
        <end position="186"/>
    </location>
</feature>
<feature type="strand" evidence="8">
    <location>
        <begin position="198"/>
        <end position="203"/>
    </location>
</feature>
<feature type="strand" evidence="8">
    <location>
        <begin position="224"/>
        <end position="237"/>
    </location>
</feature>
<feature type="strand" evidence="8">
    <location>
        <begin position="240"/>
        <end position="247"/>
    </location>
</feature>
<feature type="strand" evidence="8">
    <location>
        <begin position="249"/>
        <end position="251"/>
    </location>
</feature>
<feature type="helix" evidence="8">
    <location>
        <begin position="257"/>
        <end position="259"/>
    </location>
</feature>
<feature type="strand" evidence="8">
    <location>
        <begin position="263"/>
        <end position="268"/>
    </location>
</feature>
<feature type="turn" evidence="8">
    <location>
        <begin position="269"/>
        <end position="272"/>
    </location>
</feature>
<feature type="strand" evidence="8">
    <location>
        <begin position="273"/>
        <end position="287"/>
    </location>
</feature>
<feature type="strand" evidence="8">
    <location>
        <begin position="291"/>
        <end position="296"/>
    </location>
</feature>
<feature type="helix" evidence="8">
    <location>
        <begin position="299"/>
        <end position="307"/>
    </location>
</feature>
<feature type="strand" evidence="8">
    <location>
        <begin position="310"/>
        <end position="314"/>
    </location>
</feature>
<feature type="strand" evidence="8">
    <location>
        <begin position="318"/>
        <end position="323"/>
    </location>
</feature>
<feature type="strand" evidence="8">
    <location>
        <begin position="346"/>
        <end position="351"/>
    </location>
</feature>
<feature type="strand" evidence="8">
    <location>
        <begin position="353"/>
        <end position="359"/>
    </location>
</feature>
<feature type="strand" evidence="8">
    <location>
        <begin position="368"/>
        <end position="370"/>
    </location>
</feature>
<feature type="strand" evidence="8">
    <location>
        <begin position="375"/>
        <end position="380"/>
    </location>
</feature>
<feature type="helix" evidence="8">
    <location>
        <begin position="381"/>
        <end position="383"/>
    </location>
</feature>
<feature type="strand" evidence="8">
    <location>
        <begin position="387"/>
        <end position="391"/>
    </location>
</feature>
<feature type="strand" evidence="8">
    <location>
        <begin position="393"/>
        <end position="395"/>
    </location>
</feature>
<feature type="strand" evidence="8">
    <location>
        <begin position="400"/>
        <end position="407"/>
    </location>
</feature>
<feature type="strand" evidence="8">
    <location>
        <begin position="413"/>
        <end position="423"/>
    </location>
</feature>
<feature type="strand" evidence="8">
    <location>
        <begin position="431"/>
        <end position="433"/>
    </location>
</feature>
<feature type="strand" evidence="8">
    <location>
        <begin position="435"/>
        <end position="440"/>
    </location>
</feature>
<feature type="strand" evidence="8">
    <location>
        <begin position="449"/>
        <end position="451"/>
    </location>
</feature>
<feature type="strand" evidence="8">
    <location>
        <begin position="456"/>
        <end position="460"/>
    </location>
</feature>
<feature type="turn" evidence="8">
    <location>
        <begin position="469"/>
        <end position="473"/>
    </location>
</feature>
<feature type="strand" evidence="8">
    <location>
        <begin position="474"/>
        <end position="476"/>
    </location>
</feature>
<feature type="strand" evidence="8">
    <location>
        <begin position="481"/>
        <end position="484"/>
    </location>
</feature>
<feature type="strand" evidence="8">
    <location>
        <begin position="490"/>
        <end position="493"/>
    </location>
</feature>
<feature type="strand" evidence="8">
    <location>
        <begin position="503"/>
        <end position="505"/>
    </location>
</feature>
<feature type="strand" evidence="8">
    <location>
        <begin position="509"/>
        <end position="511"/>
    </location>
</feature>
<feature type="strand" evidence="8">
    <location>
        <begin position="513"/>
        <end position="517"/>
    </location>
</feature>
<feature type="strand" evidence="8">
    <location>
        <begin position="523"/>
        <end position="525"/>
    </location>
</feature>
<feature type="strand" evidence="8">
    <location>
        <begin position="527"/>
        <end position="529"/>
    </location>
</feature>
<feature type="strand" evidence="8">
    <location>
        <begin position="531"/>
        <end position="538"/>
    </location>
</feature>
<feature type="strand" evidence="8">
    <location>
        <begin position="548"/>
        <end position="550"/>
    </location>
</feature>
<feature type="strand" evidence="8">
    <location>
        <begin position="554"/>
        <end position="564"/>
    </location>
</feature>
<feature type="strand" evidence="8">
    <location>
        <begin position="566"/>
        <end position="568"/>
    </location>
</feature>
<feature type="strand" evidence="8">
    <location>
        <begin position="580"/>
        <end position="582"/>
    </location>
</feature>
<feature type="turn" evidence="8">
    <location>
        <begin position="589"/>
        <end position="591"/>
    </location>
</feature>
<feature type="helix" evidence="8">
    <location>
        <begin position="595"/>
        <end position="602"/>
    </location>
</feature>
<feature type="helix" evidence="8">
    <location>
        <begin position="604"/>
        <end position="610"/>
    </location>
</feature>
<feature type="helix" evidence="8">
    <location>
        <begin position="613"/>
        <end position="615"/>
    </location>
</feature>
<feature type="strand" evidence="8">
    <location>
        <begin position="616"/>
        <end position="618"/>
    </location>
</feature>
<feature type="strand" evidence="8">
    <location>
        <begin position="631"/>
        <end position="647"/>
    </location>
</feature>
<feature type="strand" evidence="8">
    <location>
        <begin position="651"/>
        <end position="661"/>
    </location>
</feature>
<feature type="strand" evidence="8">
    <location>
        <begin position="663"/>
        <end position="666"/>
    </location>
</feature>
<feature type="strand" evidence="8">
    <location>
        <begin position="669"/>
        <end position="674"/>
    </location>
</feature>
<feature type="turn" evidence="8">
    <location>
        <begin position="675"/>
        <end position="678"/>
    </location>
</feature>
<feature type="turn" evidence="8">
    <location>
        <begin position="683"/>
        <end position="686"/>
    </location>
</feature>
<feature type="strand" evidence="8">
    <location>
        <begin position="692"/>
        <end position="696"/>
    </location>
</feature>
<feature type="strand" evidence="8">
    <location>
        <begin position="701"/>
        <end position="705"/>
    </location>
</feature>
<feature type="strand" evidence="8">
    <location>
        <begin position="707"/>
        <end position="716"/>
    </location>
</feature>
<feature type="strand" evidence="8">
    <location>
        <begin position="720"/>
        <end position="724"/>
    </location>
</feature>
<feature type="strand" evidence="8">
    <location>
        <begin position="728"/>
        <end position="732"/>
    </location>
</feature>
<feature type="strand" evidence="8">
    <location>
        <begin position="734"/>
        <end position="737"/>
    </location>
</feature>
<feature type="strand" evidence="8">
    <location>
        <begin position="742"/>
        <end position="745"/>
    </location>
</feature>
<feature type="strand" evidence="8">
    <location>
        <begin position="749"/>
        <end position="753"/>
    </location>
</feature>
<feature type="strand" evidence="8">
    <location>
        <begin position="755"/>
        <end position="764"/>
    </location>
</feature>
<feature type="strand" evidence="8">
    <location>
        <begin position="769"/>
        <end position="772"/>
    </location>
</feature>
<feature type="strand" evidence="8">
    <location>
        <begin position="777"/>
        <end position="781"/>
    </location>
</feature>
<feature type="strand" evidence="8">
    <location>
        <begin position="785"/>
        <end position="787"/>
    </location>
</feature>
<feature type="strand" evidence="8">
    <location>
        <begin position="792"/>
        <end position="803"/>
    </location>
</feature>
<feature type="strand" evidence="8">
    <location>
        <begin position="805"/>
        <end position="807"/>
    </location>
</feature>
<feature type="strand" evidence="8">
    <location>
        <begin position="818"/>
        <end position="820"/>
    </location>
</feature>
<feature type="turn" evidence="8">
    <location>
        <begin position="833"/>
        <end position="835"/>
    </location>
</feature>
<feature type="strand" evidence="8">
    <location>
        <begin position="836"/>
        <end position="844"/>
    </location>
</feature>
<feature type="strand" evidence="8">
    <location>
        <begin position="846"/>
        <end position="848"/>
    </location>
</feature>
<feature type="strand" evidence="8">
    <location>
        <begin position="874"/>
        <end position="876"/>
    </location>
</feature>
<feature type="strand" evidence="8">
    <location>
        <begin position="893"/>
        <end position="895"/>
    </location>
</feature>
<feature type="strand" evidence="8">
    <location>
        <begin position="967"/>
        <end position="969"/>
    </location>
</feature>
<dbReference type="EC" id="3.4.21.-"/>
<dbReference type="EMBL" id="AF056581">
    <property type="protein sequence ID" value="AAC26634.1"/>
    <property type="molecule type" value="Genomic_DNA"/>
</dbReference>
<dbReference type="EMBL" id="FN554767">
    <property type="protein sequence ID" value="CBG27789.1"/>
    <property type="molecule type" value="Genomic_DNA"/>
</dbReference>
<dbReference type="RefSeq" id="WP_014639426.1">
    <property type="nucleotide sequence ID" value="NC_017627.1"/>
</dbReference>
<dbReference type="PDB" id="4OM9">
    <property type="method" value="X-ray"/>
    <property type="resolution" value="2.30 A"/>
    <property type="chains" value="A=53-1018"/>
</dbReference>
<dbReference type="PDBsum" id="4OM9"/>
<dbReference type="SMR" id="O68900"/>
<dbReference type="MEROPS" id="N04.002"/>
<dbReference type="MEROPS" id="S06.004"/>
<dbReference type="TCDB" id="1.B.12.4.4">
    <property type="family name" value="the autotransporter-1 (at-1) family"/>
</dbReference>
<dbReference type="KEGG" id="elo:EC042_pAA035"/>
<dbReference type="PATRIC" id="fig|216592.3.peg.5129"/>
<dbReference type="HOGENOM" id="CLU_000723_0_0_6"/>
<dbReference type="EvolutionaryTrace" id="O68900"/>
<dbReference type="Proteomes" id="UP000001407">
    <property type="component" value="Plasmid pAA"/>
</dbReference>
<dbReference type="GO" id="GO:0009279">
    <property type="term" value="C:cell outer membrane"/>
    <property type="evidence" value="ECO:0007669"/>
    <property type="project" value="UniProtKB-SubCell"/>
</dbReference>
<dbReference type="GO" id="GO:0009986">
    <property type="term" value="C:cell surface"/>
    <property type="evidence" value="ECO:0007669"/>
    <property type="project" value="UniProtKB-SubCell"/>
</dbReference>
<dbReference type="GO" id="GO:0005576">
    <property type="term" value="C:extracellular region"/>
    <property type="evidence" value="ECO:0007669"/>
    <property type="project" value="UniProtKB-SubCell"/>
</dbReference>
<dbReference type="GO" id="GO:0042597">
    <property type="term" value="C:periplasmic space"/>
    <property type="evidence" value="ECO:0007669"/>
    <property type="project" value="UniProtKB-SubCell"/>
</dbReference>
<dbReference type="GO" id="GO:0004175">
    <property type="term" value="F:endopeptidase activity"/>
    <property type="evidence" value="ECO:0007669"/>
    <property type="project" value="InterPro"/>
</dbReference>
<dbReference type="GO" id="GO:0008236">
    <property type="term" value="F:serine-type peptidase activity"/>
    <property type="evidence" value="ECO:0007669"/>
    <property type="project" value="UniProtKB-KW"/>
</dbReference>
<dbReference type="GO" id="GO:0006508">
    <property type="term" value="P:proteolysis"/>
    <property type="evidence" value="ECO:0007669"/>
    <property type="project" value="UniProtKB-KW"/>
</dbReference>
<dbReference type="Gene3D" id="2.160.20.20">
    <property type="match status" value="1"/>
</dbReference>
<dbReference type="Gene3D" id="2.40.10.120">
    <property type="match status" value="1"/>
</dbReference>
<dbReference type="Gene3D" id="2.40.128.130">
    <property type="entry name" value="Autotransporter beta-domain"/>
    <property type="match status" value="1"/>
</dbReference>
<dbReference type="InterPro" id="IPR005546">
    <property type="entry name" value="Autotransporte_beta"/>
</dbReference>
<dbReference type="InterPro" id="IPR036709">
    <property type="entry name" value="Autotransporte_beta_dom_sf"/>
</dbReference>
<dbReference type="InterPro" id="IPR012332">
    <property type="entry name" value="Autotransporter_pectin_lyase_C"/>
</dbReference>
<dbReference type="InterPro" id="IPR006315">
    <property type="entry name" value="OM_autotransptr_brl_dom"/>
</dbReference>
<dbReference type="InterPro" id="IPR011050">
    <property type="entry name" value="Pectin_lyase_fold/virulence"/>
</dbReference>
<dbReference type="InterPro" id="IPR030396">
    <property type="entry name" value="Peptidase_S6_dom"/>
</dbReference>
<dbReference type="NCBIfam" id="TIGR01414">
    <property type="entry name" value="autotrans_barl"/>
    <property type="match status" value="1"/>
</dbReference>
<dbReference type="Pfam" id="PF03797">
    <property type="entry name" value="Autotransporter"/>
    <property type="match status" value="1"/>
</dbReference>
<dbReference type="Pfam" id="PF02395">
    <property type="entry name" value="Peptidase_S6"/>
    <property type="match status" value="1"/>
</dbReference>
<dbReference type="SMART" id="SM00869">
    <property type="entry name" value="Autotransporter"/>
    <property type="match status" value="1"/>
</dbReference>
<dbReference type="SUPFAM" id="SSF103515">
    <property type="entry name" value="Autotransporter"/>
    <property type="match status" value="1"/>
</dbReference>
<dbReference type="SUPFAM" id="SSF51126">
    <property type="entry name" value="Pectin lyase-like"/>
    <property type="match status" value="1"/>
</dbReference>
<dbReference type="PROSITE" id="PS51208">
    <property type="entry name" value="AUTOTRANSPORTER"/>
    <property type="match status" value="1"/>
</dbReference>
<dbReference type="PROSITE" id="PS51691">
    <property type="entry name" value="PEPTIDASE_S6"/>
    <property type="match status" value="1"/>
</dbReference>
<proteinExistence type="evidence at protein level"/>
<gene>
    <name type="primary">pet</name>
    <name type="ordered locus">EC042_pAA035</name>
</gene>
<name>PET_ECO44</name>
<geneLocation type="plasmid">
    <name>pAA2</name>
</geneLocation>
<reference key="1">
    <citation type="journal article" date="1998" name="Infect. Immun.">
        <title>Pet, an autotransporter enterotoxin from enteroaggregative Escherichia coli.</title>
        <authorList>
            <person name="Eslava C."/>
            <person name="Navarro-Garcia F."/>
            <person name="Czeczulin J.R."/>
            <person name="Henderson I.R."/>
            <person name="Cravioto A."/>
            <person name="Nataro J.P."/>
        </authorList>
    </citation>
    <scope>NUCLEOTIDE SEQUENCE [GENOMIC DNA]</scope>
    <scope>PROTEIN SEQUENCE OF 53-64 AND 1019-1028</scope>
    <scope>FUNCTION</scope>
</reference>
<reference key="2">
    <citation type="journal article" date="2010" name="PLoS ONE">
        <title>Complete genome sequence and comparative metabolic profiling of the prototypical enteroaggregative Escherichia coli strain 042.</title>
        <authorList>
            <person name="Chaudhuri R.R."/>
            <person name="Sebaihia M."/>
            <person name="Hobman J.L."/>
            <person name="Webber M.A."/>
            <person name="Leyton D.L."/>
            <person name="Goldberg M.D."/>
            <person name="Cunningham A.F."/>
            <person name="Scott-Tucker A."/>
            <person name="Ferguson P.R."/>
            <person name="Thomas C.M."/>
            <person name="Frankel G."/>
            <person name="Tang C.M."/>
            <person name="Dudley E.G."/>
            <person name="Roberts I.S."/>
            <person name="Rasko D.A."/>
            <person name="Pallen M.J."/>
            <person name="Parkhill J."/>
            <person name="Nataro J.P."/>
            <person name="Thomson N.R."/>
            <person name="Henderson I.R."/>
        </authorList>
    </citation>
    <scope>NUCLEOTIDE SEQUENCE [LARGE SCALE GENOMIC DNA]</scope>
    <source>
        <strain>042 / EAEC</strain>
    </source>
</reference>
<reference key="3">
    <citation type="journal article" date="1999" name="Infect. Immun.">
        <title>Cytoskeletal effects induced by pet, the serine protease enterotoxin of enteroaggregative Escherichia coli.</title>
        <authorList>
            <person name="Navarro-Garcia F."/>
            <person name="Sears C."/>
            <person name="Eslava C."/>
            <person name="Cravioto A."/>
            <person name="Nataro J.P."/>
        </authorList>
    </citation>
    <scope>FUNCTION</scope>
    <scope>ACTIVITY REGULATION</scope>
    <scope>MUTAGENESIS OF SER-260</scope>
</reference>
<reference key="4">
    <citation type="journal article" date="1999" name="Infect. Immun.">
        <title>Involvement of the enteroaggregative Escherichia coli plasmid-encoded toxin in causing human intestinal damage.</title>
        <authorList>
            <person name="Henderson I.R."/>
            <person name="Hicks S."/>
            <person name="Navarro-Garcia F."/>
            <person name="Elias W.P."/>
            <person name="Philips A.D."/>
            <person name="Nataro J.P."/>
        </authorList>
    </citation>
    <scope>FUNCTION</scope>
</reference>
<reference key="5">
    <citation type="journal article" date="2001" name="Infect. Immun.">
        <title>Plasmid-encoded toxin of enteroaggregative Escherichia coli is internalized by epithelial cells.</title>
        <authorList>
            <person name="Navarro-Garcia F."/>
            <person name="Canizalez-Roman A."/>
            <person name="Luna J."/>
            <person name="Sears C."/>
            <person name="Nataro J.P."/>
        </authorList>
    </citation>
    <scope>FUNCTION</scope>
    <scope>MUTAGENESIS OF 1018-ASN-ASN-1019</scope>
</reference>